<feature type="chain" id="PRO_0000132439" description="Small ribosomal subunit protein uS4">
    <location>
        <begin position="1"/>
        <end position="206"/>
    </location>
</feature>
<feature type="domain" description="S4 RNA-binding" evidence="1">
    <location>
        <begin position="96"/>
        <end position="156"/>
    </location>
</feature>
<proteinExistence type="inferred from homology"/>
<keyword id="KW-1185">Reference proteome</keyword>
<keyword id="KW-0687">Ribonucleoprotein</keyword>
<keyword id="KW-0689">Ribosomal protein</keyword>
<keyword id="KW-0694">RNA-binding</keyword>
<keyword id="KW-0699">rRNA-binding</keyword>
<dbReference type="EMBL" id="AE015451">
    <property type="protein sequence ID" value="AAN66108.1"/>
    <property type="molecule type" value="Genomic_DNA"/>
</dbReference>
<dbReference type="RefSeq" id="NP_742644.1">
    <property type="nucleotide sequence ID" value="NC_002947.4"/>
</dbReference>
<dbReference type="RefSeq" id="WP_003255453.1">
    <property type="nucleotide sequence ID" value="NZ_CP169744.1"/>
</dbReference>
<dbReference type="SMR" id="Q88QL2"/>
<dbReference type="STRING" id="160488.PP_0478"/>
<dbReference type="PaxDb" id="160488-PP_0478"/>
<dbReference type="GeneID" id="83677776"/>
<dbReference type="KEGG" id="ppu:PP_0478"/>
<dbReference type="PATRIC" id="fig|160488.4.peg.510"/>
<dbReference type="eggNOG" id="COG0522">
    <property type="taxonomic scope" value="Bacteria"/>
</dbReference>
<dbReference type="HOGENOM" id="CLU_092403_0_2_6"/>
<dbReference type="OrthoDB" id="9803672at2"/>
<dbReference type="PhylomeDB" id="Q88QL2"/>
<dbReference type="BioCyc" id="PPUT160488:G1G01-525-MONOMER"/>
<dbReference type="Proteomes" id="UP000000556">
    <property type="component" value="Chromosome"/>
</dbReference>
<dbReference type="GO" id="GO:0015935">
    <property type="term" value="C:small ribosomal subunit"/>
    <property type="evidence" value="ECO:0007669"/>
    <property type="project" value="InterPro"/>
</dbReference>
<dbReference type="GO" id="GO:0019843">
    <property type="term" value="F:rRNA binding"/>
    <property type="evidence" value="ECO:0007669"/>
    <property type="project" value="UniProtKB-UniRule"/>
</dbReference>
<dbReference type="GO" id="GO:0003735">
    <property type="term" value="F:structural constituent of ribosome"/>
    <property type="evidence" value="ECO:0007669"/>
    <property type="project" value="InterPro"/>
</dbReference>
<dbReference type="GO" id="GO:0042274">
    <property type="term" value="P:ribosomal small subunit biogenesis"/>
    <property type="evidence" value="ECO:0007669"/>
    <property type="project" value="TreeGrafter"/>
</dbReference>
<dbReference type="GO" id="GO:0006412">
    <property type="term" value="P:translation"/>
    <property type="evidence" value="ECO:0007669"/>
    <property type="project" value="UniProtKB-UniRule"/>
</dbReference>
<dbReference type="CDD" id="cd00165">
    <property type="entry name" value="S4"/>
    <property type="match status" value="1"/>
</dbReference>
<dbReference type="FunFam" id="1.10.1050.10:FF:000001">
    <property type="entry name" value="30S ribosomal protein S4"/>
    <property type="match status" value="1"/>
</dbReference>
<dbReference type="FunFam" id="3.10.290.10:FF:000001">
    <property type="entry name" value="30S ribosomal protein S4"/>
    <property type="match status" value="1"/>
</dbReference>
<dbReference type="Gene3D" id="1.10.1050.10">
    <property type="entry name" value="Ribosomal Protein S4 Delta 41, Chain A, domain 1"/>
    <property type="match status" value="1"/>
</dbReference>
<dbReference type="Gene3D" id="3.10.290.10">
    <property type="entry name" value="RNA-binding S4 domain"/>
    <property type="match status" value="1"/>
</dbReference>
<dbReference type="HAMAP" id="MF_01306_B">
    <property type="entry name" value="Ribosomal_uS4_B"/>
    <property type="match status" value="1"/>
</dbReference>
<dbReference type="InterPro" id="IPR022801">
    <property type="entry name" value="Ribosomal_uS4"/>
</dbReference>
<dbReference type="InterPro" id="IPR005709">
    <property type="entry name" value="Ribosomal_uS4_bac-type"/>
</dbReference>
<dbReference type="InterPro" id="IPR018079">
    <property type="entry name" value="Ribosomal_uS4_CS"/>
</dbReference>
<dbReference type="InterPro" id="IPR001912">
    <property type="entry name" value="Ribosomal_uS4_N"/>
</dbReference>
<dbReference type="InterPro" id="IPR002942">
    <property type="entry name" value="S4_RNA-bd"/>
</dbReference>
<dbReference type="InterPro" id="IPR036986">
    <property type="entry name" value="S4_RNA-bd_sf"/>
</dbReference>
<dbReference type="NCBIfam" id="NF003717">
    <property type="entry name" value="PRK05327.1"/>
    <property type="match status" value="1"/>
</dbReference>
<dbReference type="NCBIfam" id="TIGR01017">
    <property type="entry name" value="rpsD_bact"/>
    <property type="match status" value="1"/>
</dbReference>
<dbReference type="PANTHER" id="PTHR11831">
    <property type="entry name" value="30S 40S RIBOSOMAL PROTEIN"/>
    <property type="match status" value="1"/>
</dbReference>
<dbReference type="PANTHER" id="PTHR11831:SF4">
    <property type="entry name" value="SMALL RIBOSOMAL SUBUNIT PROTEIN US4M"/>
    <property type="match status" value="1"/>
</dbReference>
<dbReference type="Pfam" id="PF00163">
    <property type="entry name" value="Ribosomal_S4"/>
    <property type="match status" value="1"/>
</dbReference>
<dbReference type="Pfam" id="PF01479">
    <property type="entry name" value="S4"/>
    <property type="match status" value="1"/>
</dbReference>
<dbReference type="SMART" id="SM01390">
    <property type="entry name" value="Ribosomal_S4"/>
    <property type="match status" value="1"/>
</dbReference>
<dbReference type="SMART" id="SM00363">
    <property type="entry name" value="S4"/>
    <property type="match status" value="1"/>
</dbReference>
<dbReference type="SUPFAM" id="SSF55174">
    <property type="entry name" value="Alpha-L RNA-binding motif"/>
    <property type="match status" value="1"/>
</dbReference>
<dbReference type="PROSITE" id="PS00632">
    <property type="entry name" value="RIBOSOMAL_S4"/>
    <property type="match status" value="1"/>
</dbReference>
<dbReference type="PROSITE" id="PS50889">
    <property type="entry name" value="S4"/>
    <property type="match status" value="1"/>
</dbReference>
<gene>
    <name evidence="1" type="primary">rpsD</name>
    <name type="ordered locus">PP_0478</name>
</gene>
<name>RS4_PSEPK</name>
<protein>
    <recommendedName>
        <fullName evidence="1">Small ribosomal subunit protein uS4</fullName>
    </recommendedName>
    <alternativeName>
        <fullName evidence="2">30S ribosomal protein S4</fullName>
    </alternativeName>
</protein>
<comment type="function">
    <text evidence="1">One of the primary rRNA binding proteins, it binds directly to 16S rRNA where it nucleates assembly of the body of the 30S subunit.</text>
</comment>
<comment type="function">
    <text evidence="1">With S5 and S12 plays an important role in translational accuracy.</text>
</comment>
<comment type="subunit">
    <text evidence="1">Part of the 30S ribosomal subunit. Contacts protein S5. The interaction surface between S4 and S5 is involved in control of translational fidelity.</text>
</comment>
<comment type="similarity">
    <text evidence="1">Belongs to the universal ribosomal protein uS4 family.</text>
</comment>
<reference key="1">
    <citation type="journal article" date="2002" name="Environ. Microbiol.">
        <title>Complete genome sequence and comparative analysis of the metabolically versatile Pseudomonas putida KT2440.</title>
        <authorList>
            <person name="Nelson K.E."/>
            <person name="Weinel C."/>
            <person name="Paulsen I.T."/>
            <person name="Dodson R.J."/>
            <person name="Hilbert H."/>
            <person name="Martins dos Santos V.A.P."/>
            <person name="Fouts D.E."/>
            <person name="Gill S.R."/>
            <person name="Pop M."/>
            <person name="Holmes M."/>
            <person name="Brinkac L.M."/>
            <person name="Beanan M.J."/>
            <person name="DeBoy R.T."/>
            <person name="Daugherty S.C."/>
            <person name="Kolonay J.F."/>
            <person name="Madupu R."/>
            <person name="Nelson W.C."/>
            <person name="White O."/>
            <person name="Peterson J.D."/>
            <person name="Khouri H.M."/>
            <person name="Hance I."/>
            <person name="Chris Lee P."/>
            <person name="Holtzapple E.K."/>
            <person name="Scanlan D."/>
            <person name="Tran K."/>
            <person name="Moazzez A."/>
            <person name="Utterback T.R."/>
            <person name="Rizzo M."/>
            <person name="Lee K."/>
            <person name="Kosack D."/>
            <person name="Moestl D."/>
            <person name="Wedler H."/>
            <person name="Lauber J."/>
            <person name="Stjepandic D."/>
            <person name="Hoheisel J."/>
            <person name="Straetz M."/>
            <person name="Heim S."/>
            <person name="Kiewitz C."/>
            <person name="Eisen J.A."/>
            <person name="Timmis K.N."/>
            <person name="Duesterhoeft A."/>
            <person name="Tuemmler B."/>
            <person name="Fraser C.M."/>
        </authorList>
    </citation>
    <scope>NUCLEOTIDE SEQUENCE [LARGE SCALE GENOMIC DNA]</scope>
    <source>
        <strain>ATCC 47054 / DSM 6125 / CFBP 8728 / NCIMB 11950 / KT2440</strain>
    </source>
</reference>
<organism>
    <name type="scientific">Pseudomonas putida (strain ATCC 47054 / DSM 6125 / CFBP 8728 / NCIMB 11950 / KT2440)</name>
    <dbReference type="NCBI Taxonomy" id="160488"/>
    <lineage>
        <taxon>Bacteria</taxon>
        <taxon>Pseudomonadati</taxon>
        <taxon>Pseudomonadota</taxon>
        <taxon>Gammaproteobacteria</taxon>
        <taxon>Pseudomonadales</taxon>
        <taxon>Pseudomonadaceae</taxon>
        <taxon>Pseudomonas</taxon>
    </lineage>
</organism>
<evidence type="ECO:0000255" key="1">
    <source>
        <dbReference type="HAMAP-Rule" id="MF_01306"/>
    </source>
</evidence>
<evidence type="ECO:0000305" key="2"/>
<sequence length="206" mass="23056">MARYIGPKCKLSRREGTDLFLKSGVRALESKCNIEAAPGIHGQRRGRQSDYGTQLREKQKVRRIYGVLERQFRGYYQAAASKKGATGENLLQLLECRLDNVVYRMGFGSTRSESRQLVSHKAISVNGKTVNIPSYQVRPGDVVAVREKSLGQLRIVQALELCAQRGRVEWVDVDAAKKSGVFKNVPARSDLSADINENLIVELYSK</sequence>
<accession>Q88QL2</accession>